<evidence type="ECO:0000255" key="1">
    <source>
        <dbReference type="HAMAP-Rule" id="MF_01006"/>
    </source>
</evidence>
<protein>
    <recommendedName>
        <fullName evidence="1">Undecaprenyl-diphosphatase 2</fullName>
        <ecNumber evidence="1">3.6.1.27</ecNumber>
    </recommendedName>
    <alternativeName>
        <fullName evidence="1">Bacitracin resistance protein 2</fullName>
    </alternativeName>
    <alternativeName>
        <fullName evidence="1">Undecaprenyl pyrophosphate phosphatase 2</fullName>
    </alternativeName>
</protein>
<accession>Q6FDP8</accession>
<name>UPPP2_ACIAD</name>
<feature type="chain" id="PRO_0000151077" description="Undecaprenyl-diphosphatase 2">
    <location>
        <begin position="1"/>
        <end position="285"/>
    </location>
</feature>
<feature type="transmembrane region" description="Helical" evidence="1">
    <location>
        <begin position="5"/>
        <end position="25"/>
    </location>
</feature>
<feature type="transmembrane region" description="Helical" evidence="1">
    <location>
        <begin position="47"/>
        <end position="67"/>
    </location>
</feature>
<feature type="transmembrane region" description="Helical" evidence="1">
    <location>
        <begin position="86"/>
        <end position="106"/>
    </location>
</feature>
<feature type="transmembrane region" description="Helical" evidence="1">
    <location>
        <begin position="122"/>
        <end position="142"/>
    </location>
</feature>
<feature type="transmembrane region" description="Helical" evidence="1">
    <location>
        <begin position="156"/>
        <end position="176"/>
    </location>
</feature>
<feature type="transmembrane region" description="Helical" evidence="1">
    <location>
        <begin position="198"/>
        <end position="218"/>
    </location>
</feature>
<feature type="transmembrane region" description="Helical" evidence="1">
    <location>
        <begin position="235"/>
        <end position="255"/>
    </location>
</feature>
<feature type="transmembrane region" description="Helical" evidence="1">
    <location>
        <begin position="265"/>
        <end position="285"/>
    </location>
</feature>
<reference key="1">
    <citation type="journal article" date="2004" name="Nucleic Acids Res.">
        <title>Unique features revealed by the genome sequence of Acinetobacter sp. ADP1, a versatile and naturally transformation competent bacterium.</title>
        <authorList>
            <person name="Barbe V."/>
            <person name="Vallenet D."/>
            <person name="Fonknechten N."/>
            <person name="Kreimeyer A."/>
            <person name="Oztas S."/>
            <person name="Labarre L."/>
            <person name="Cruveiller S."/>
            <person name="Robert C."/>
            <person name="Duprat S."/>
            <person name="Wincker P."/>
            <person name="Ornston L.N."/>
            <person name="Weissenbach J."/>
            <person name="Marliere P."/>
            <person name="Cohen G.N."/>
            <person name="Medigue C."/>
        </authorList>
    </citation>
    <scope>NUCLEOTIDE SEQUENCE [LARGE SCALE GENOMIC DNA]</scope>
    <source>
        <strain>ATCC 33305 / BD413 / ADP1</strain>
    </source>
</reference>
<sequence>MSHAMDLLHVFILAVIQGLAELLPVSSSAHVILAEKLMGFDPSAPNMTFLLVMLHTGTMFAVIVYFWHSWKKTYFFDWQSFKQRAWYVLLATAITGVLGLLLQSLIKHVFFGGVSSFEIEHLFSNSKLMAAALAAAGILIILSSRLDRGQQGDIRLPSAMIIGAVQALCLPFRGFSRSGATISTGLFLGISRQKAEEFSFALAVVLTPAVIVKELVRLLHAQHATTGATHLALGSLLLPSIFGMVFSFLTGLLALKWLSAWLEHGRWYLFGIYCLAFSGVVLTLA</sequence>
<keyword id="KW-0046">Antibiotic resistance</keyword>
<keyword id="KW-0997">Cell inner membrane</keyword>
<keyword id="KW-1003">Cell membrane</keyword>
<keyword id="KW-0133">Cell shape</keyword>
<keyword id="KW-0961">Cell wall biogenesis/degradation</keyword>
<keyword id="KW-0378">Hydrolase</keyword>
<keyword id="KW-0472">Membrane</keyword>
<keyword id="KW-0573">Peptidoglycan synthesis</keyword>
<keyword id="KW-0812">Transmembrane</keyword>
<keyword id="KW-1133">Transmembrane helix</keyword>
<organism>
    <name type="scientific">Acinetobacter baylyi (strain ATCC 33305 / BD413 / ADP1)</name>
    <dbReference type="NCBI Taxonomy" id="62977"/>
    <lineage>
        <taxon>Bacteria</taxon>
        <taxon>Pseudomonadati</taxon>
        <taxon>Pseudomonadota</taxon>
        <taxon>Gammaproteobacteria</taxon>
        <taxon>Moraxellales</taxon>
        <taxon>Moraxellaceae</taxon>
        <taxon>Acinetobacter</taxon>
    </lineage>
</organism>
<comment type="function">
    <text evidence="1">Catalyzes the dephosphorylation of undecaprenyl diphosphate (UPP). Confers resistance to bacitracin.</text>
</comment>
<comment type="catalytic activity">
    <reaction evidence="1">
        <text>di-trans,octa-cis-undecaprenyl diphosphate + H2O = di-trans,octa-cis-undecaprenyl phosphate + phosphate + H(+)</text>
        <dbReference type="Rhea" id="RHEA:28094"/>
        <dbReference type="ChEBI" id="CHEBI:15377"/>
        <dbReference type="ChEBI" id="CHEBI:15378"/>
        <dbReference type="ChEBI" id="CHEBI:43474"/>
        <dbReference type="ChEBI" id="CHEBI:58405"/>
        <dbReference type="ChEBI" id="CHEBI:60392"/>
        <dbReference type="EC" id="3.6.1.27"/>
    </reaction>
</comment>
<comment type="subcellular location">
    <subcellularLocation>
        <location evidence="1">Cell inner membrane</location>
        <topology evidence="1">Multi-pass membrane protein</topology>
    </subcellularLocation>
</comment>
<comment type="miscellaneous">
    <text>Bacitracin is thought to be involved in the inhibition of peptidoglycan synthesis by sequestering undecaprenyl diphosphate, thereby reducing the pool of lipid carrier available.</text>
</comment>
<comment type="similarity">
    <text evidence="1">Belongs to the UppP family.</text>
</comment>
<dbReference type="EC" id="3.6.1.27" evidence="1"/>
<dbReference type="EMBL" id="CR543861">
    <property type="protein sequence ID" value="CAG67810.1"/>
    <property type="molecule type" value="Genomic_DNA"/>
</dbReference>
<dbReference type="SMR" id="Q6FDP8"/>
<dbReference type="STRING" id="202950.GCA_001485005_02660"/>
<dbReference type="KEGG" id="aci:ACIAD0914"/>
<dbReference type="eggNOG" id="COG1968">
    <property type="taxonomic scope" value="Bacteria"/>
</dbReference>
<dbReference type="HOGENOM" id="CLU_060296_1_2_6"/>
<dbReference type="Proteomes" id="UP000000430">
    <property type="component" value="Chromosome"/>
</dbReference>
<dbReference type="GO" id="GO:0005886">
    <property type="term" value="C:plasma membrane"/>
    <property type="evidence" value="ECO:0007669"/>
    <property type="project" value="UniProtKB-SubCell"/>
</dbReference>
<dbReference type="GO" id="GO:0050380">
    <property type="term" value="F:undecaprenyl-diphosphatase activity"/>
    <property type="evidence" value="ECO:0007669"/>
    <property type="project" value="UniProtKB-UniRule"/>
</dbReference>
<dbReference type="GO" id="GO:0071555">
    <property type="term" value="P:cell wall organization"/>
    <property type="evidence" value="ECO:0007669"/>
    <property type="project" value="UniProtKB-KW"/>
</dbReference>
<dbReference type="GO" id="GO:0009252">
    <property type="term" value="P:peptidoglycan biosynthetic process"/>
    <property type="evidence" value="ECO:0007669"/>
    <property type="project" value="UniProtKB-KW"/>
</dbReference>
<dbReference type="GO" id="GO:0008360">
    <property type="term" value="P:regulation of cell shape"/>
    <property type="evidence" value="ECO:0007669"/>
    <property type="project" value="UniProtKB-KW"/>
</dbReference>
<dbReference type="GO" id="GO:0046677">
    <property type="term" value="P:response to antibiotic"/>
    <property type="evidence" value="ECO:0007669"/>
    <property type="project" value="UniProtKB-UniRule"/>
</dbReference>
<dbReference type="HAMAP" id="MF_01006">
    <property type="entry name" value="Undec_diphosphatase"/>
    <property type="match status" value="1"/>
</dbReference>
<dbReference type="InterPro" id="IPR003824">
    <property type="entry name" value="UppP"/>
</dbReference>
<dbReference type="PANTHER" id="PTHR30622">
    <property type="entry name" value="UNDECAPRENYL-DIPHOSPHATASE"/>
    <property type="match status" value="1"/>
</dbReference>
<dbReference type="PANTHER" id="PTHR30622:SF2">
    <property type="entry name" value="UNDECAPRENYL-DIPHOSPHATASE"/>
    <property type="match status" value="1"/>
</dbReference>
<dbReference type="Pfam" id="PF02673">
    <property type="entry name" value="BacA"/>
    <property type="match status" value="1"/>
</dbReference>
<gene>
    <name evidence="1" type="primary">uppP2</name>
    <name type="ordered locus">ACIAD0914</name>
</gene>
<proteinExistence type="inferred from homology"/>